<gene>
    <name evidence="5" type="primary">Atox1</name>
</gene>
<comment type="function">
    <text evidence="1">Binds and deliver cytosolic copper to the copper ATPase proteins. May be important in cellular antioxidant defense (By similarity).</text>
</comment>
<comment type="subunit">
    <text evidence="2">Homodimer. Interacts with ATP7B. Interacts with ATP7A. Interacts (via dimer form) with SLC31A1 (via C-terminal domain); this interaction improves ATOX1 stability and controls intracellular Cu(I) levels.</text>
</comment>
<comment type="domain">
    <text evidence="2">The heavy-metal-associated domain (HMA) coordinates a Cu(+) ion via the cysteine residues within the CXXC motif. The transfer of Cu(+) ion from ATOX1 to ATP7A involves the formation of a three-coordinate Cu(+)-bridged heterodimer where the metal is shared between the two metal binding sites of ATOX1 and ATP7A. The Cu(+) ion appears to switch between two coordination modes, forming two links with one protein and one with the other. Cisplatin, a chemotherapeutic drug, can bind the CXXC motif and hinder the release of Cu(+) ion.</text>
</comment>
<comment type="similarity">
    <text evidence="4">Belongs to the ATX1 family.</text>
</comment>
<dbReference type="EMBL" id="AF004591">
    <property type="protein sequence ID" value="AAB61465.1"/>
    <property type="molecule type" value="mRNA"/>
</dbReference>
<dbReference type="EMBL" id="AK002432">
    <property type="protein sequence ID" value="BAB22098.1"/>
    <property type="molecule type" value="mRNA"/>
</dbReference>
<dbReference type="EMBL" id="AL596207">
    <property type="status" value="NOT_ANNOTATED_CDS"/>
    <property type="molecule type" value="Genomic_DNA"/>
</dbReference>
<dbReference type="EMBL" id="BC027632">
    <property type="protein sequence ID" value="AAH27632.1"/>
    <property type="molecule type" value="mRNA"/>
</dbReference>
<dbReference type="CCDS" id="CCDS36158.1"/>
<dbReference type="RefSeq" id="NP_033850.1">
    <property type="nucleotide sequence ID" value="NM_009720.3"/>
</dbReference>
<dbReference type="SMR" id="O08997"/>
<dbReference type="BioGRID" id="198242">
    <property type="interactions" value="2"/>
</dbReference>
<dbReference type="FunCoup" id="O08997">
    <property type="interactions" value="1576"/>
</dbReference>
<dbReference type="STRING" id="10090.ENSMUSP00000104485"/>
<dbReference type="GlyGen" id="O08997">
    <property type="glycosylation" value="1 site, 1 O-linked glycan (1 site)"/>
</dbReference>
<dbReference type="iPTMnet" id="O08997"/>
<dbReference type="PhosphoSitePlus" id="O08997"/>
<dbReference type="SwissPalm" id="O08997"/>
<dbReference type="CPTAC" id="non-CPTAC-3768"/>
<dbReference type="jPOST" id="O08997"/>
<dbReference type="PaxDb" id="10090-ENSMUSP00000104485"/>
<dbReference type="PeptideAtlas" id="O08997"/>
<dbReference type="ProteomicsDB" id="265155"/>
<dbReference type="Pumba" id="O08997"/>
<dbReference type="TopDownProteomics" id="O08997"/>
<dbReference type="Antibodypedia" id="28244">
    <property type="antibodies" value="231 antibodies from 24 providers"/>
</dbReference>
<dbReference type="DNASU" id="11927"/>
<dbReference type="Ensembl" id="ENSMUST00000108857.2">
    <property type="protein sequence ID" value="ENSMUSP00000104485.2"/>
    <property type="gene ID" value="ENSMUSG00000018585.10"/>
</dbReference>
<dbReference type="GeneID" id="11927"/>
<dbReference type="KEGG" id="mmu:11927"/>
<dbReference type="UCSC" id="uc007izj.1">
    <property type="organism name" value="mouse"/>
</dbReference>
<dbReference type="AGR" id="MGI:1333855"/>
<dbReference type="CTD" id="475"/>
<dbReference type="MGI" id="MGI:1333855">
    <property type="gene designation" value="Atox1"/>
</dbReference>
<dbReference type="VEuPathDB" id="HostDB:ENSMUSG00000018585"/>
<dbReference type="eggNOG" id="KOG1603">
    <property type="taxonomic scope" value="Eukaryota"/>
</dbReference>
<dbReference type="GeneTree" id="ENSGT00940000162517"/>
<dbReference type="HOGENOM" id="CLU_134973_3_1_1"/>
<dbReference type="InParanoid" id="O08997"/>
<dbReference type="OMA" id="MTHTYKF"/>
<dbReference type="OrthoDB" id="689350at2759"/>
<dbReference type="PhylomeDB" id="O08997"/>
<dbReference type="TreeFam" id="TF352589"/>
<dbReference type="Reactome" id="R-MMU-6803544">
    <property type="pathway name" value="Ion influx/efflux at host-pathogen interface"/>
</dbReference>
<dbReference type="BioGRID-ORCS" id="11927">
    <property type="hits" value="3 hits in 79 CRISPR screens"/>
</dbReference>
<dbReference type="ChiTaRS" id="Atox1">
    <property type="organism name" value="mouse"/>
</dbReference>
<dbReference type="PRO" id="PR:O08997"/>
<dbReference type="Proteomes" id="UP000000589">
    <property type="component" value="Chromosome 11"/>
</dbReference>
<dbReference type="RNAct" id="O08997">
    <property type="molecule type" value="protein"/>
</dbReference>
<dbReference type="Bgee" id="ENSMUSG00000018585">
    <property type="expression patterns" value="Expressed in yolk sac and 268 other cell types or tissues"/>
</dbReference>
<dbReference type="GO" id="GO:0005829">
    <property type="term" value="C:cytosol"/>
    <property type="evidence" value="ECO:0000304"/>
    <property type="project" value="Reactome"/>
</dbReference>
<dbReference type="GO" id="GO:0051117">
    <property type="term" value="F:ATPase binding"/>
    <property type="evidence" value="ECO:0007669"/>
    <property type="project" value="Ensembl"/>
</dbReference>
<dbReference type="GO" id="GO:0016531">
    <property type="term" value="F:copper chaperone activity"/>
    <property type="evidence" value="ECO:0007669"/>
    <property type="project" value="Ensembl"/>
</dbReference>
<dbReference type="GO" id="GO:0032767">
    <property type="term" value="F:copper-dependent protein binding"/>
    <property type="evidence" value="ECO:0007669"/>
    <property type="project" value="Ensembl"/>
</dbReference>
<dbReference type="GO" id="GO:1903136">
    <property type="term" value="F:cuprous ion binding"/>
    <property type="evidence" value="ECO:0007669"/>
    <property type="project" value="Ensembl"/>
</dbReference>
<dbReference type="GO" id="GO:0060003">
    <property type="term" value="P:copper ion export"/>
    <property type="evidence" value="ECO:0007669"/>
    <property type="project" value="Ensembl"/>
</dbReference>
<dbReference type="GO" id="GO:0006825">
    <property type="term" value="P:copper ion transport"/>
    <property type="evidence" value="ECO:0000315"/>
    <property type="project" value="MGI"/>
</dbReference>
<dbReference type="GO" id="GO:0006878">
    <property type="term" value="P:intracellular copper ion homeostasis"/>
    <property type="evidence" value="ECO:0000315"/>
    <property type="project" value="MGI"/>
</dbReference>
<dbReference type="GO" id="GO:0043066">
    <property type="term" value="P:negative regulation of apoptotic process"/>
    <property type="evidence" value="ECO:0007669"/>
    <property type="project" value="Ensembl"/>
</dbReference>
<dbReference type="GO" id="GO:0006979">
    <property type="term" value="P:response to oxidative stress"/>
    <property type="evidence" value="ECO:0007669"/>
    <property type="project" value="Ensembl"/>
</dbReference>
<dbReference type="CDD" id="cd00371">
    <property type="entry name" value="HMA"/>
    <property type="match status" value="1"/>
</dbReference>
<dbReference type="FunFam" id="3.30.70.100:FF:000008">
    <property type="entry name" value="Copper transport protein ATOX1"/>
    <property type="match status" value="1"/>
</dbReference>
<dbReference type="Gene3D" id="3.30.70.100">
    <property type="match status" value="1"/>
</dbReference>
<dbReference type="InterPro" id="IPR051881">
    <property type="entry name" value="Copper_transport_ATOX1-like"/>
</dbReference>
<dbReference type="InterPro" id="IPR017969">
    <property type="entry name" value="Heavy-metal-associated_CS"/>
</dbReference>
<dbReference type="InterPro" id="IPR006121">
    <property type="entry name" value="HMA_dom"/>
</dbReference>
<dbReference type="InterPro" id="IPR036163">
    <property type="entry name" value="HMA_dom_sf"/>
</dbReference>
<dbReference type="PANTHER" id="PTHR46365">
    <property type="entry name" value="COPPER TRANSPORT PROTEIN ATOX1"/>
    <property type="match status" value="1"/>
</dbReference>
<dbReference type="PANTHER" id="PTHR46365:SF1">
    <property type="entry name" value="COPPER TRANSPORT PROTEIN ATOX1"/>
    <property type="match status" value="1"/>
</dbReference>
<dbReference type="Pfam" id="PF00403">
    <property type="entry name" value="HMA"/>
    <property type="match status" value="1"/>
</dbReference>
<dbReference type="SUPFAM" id="SSF55008">
    <property type="entry name" value="HMA, heavy metal-associated domain"/>
    <property type="match status" value="1"/>
</dbReference>
<dbReference type="PROSITE" id="PS01047">
    <property type="entry name" value="HMA_1"/>
    <property type="match status" value="1"/>
</dbReference>
<dbReference type="PROSITE" id="PS50846">
    <property type="entry name" value="HMA_2"/>
    <property type="match status" value="1"/>
</dbReference>
<reference key="1">
    <citation type="journal article" date="2000" name="Genomics">
        <title>Structure, expression, and chromosomal localization of the mouse Atox1 gene.</title>
        <authorList>
            <person name="Hamza I."/>
            <person name="Klomp L.W.J."/>
            <person name="Gaedigk R."/>
            <person name="White R.A."/>
            <person name="Gitlin J.D."/>
        </authorList>
    </citation>
    <scope>NUCLEOTIDE SEQUENCE [MRNA]</scope>
    <source>
        <strain>BALB/cJ</strain>
        <tissue>Lung</tissue>
    </source>
</reference>
<reference key="2">
    <citation type="journal article" date="2005" name="Science">
        <title>The transcriptional landscape of the mammalian genome.</title>
        <authorList>
            <person name="Carninci P."/>
            <person name="Kasukawa T."/>
            <person name="Katayama S."/>
            <person name="Gough J."/>
            <person name="Frith M.C."/>
            <person name="Maeda N."/>
            <person name="Oyama R."/>
            <person name="Ravasi T."/>
            <person name="Lenhard B."/>
            <person name="Wells C."/>
            <person name="Kodzius R."/>
            <person name="Shimokawa K."/>
            <person name="Bajic V.B."/>
            <person name="Brenner S.E."/>
            <person name="Batalov S."/>
            <person name="Forrest A.R."/>
            <person name="Zavolan M."/>
            <person name="Davis M.J."/>
            <person name="Wilming L.G."/>
            <person name="Aidinis V."/>
            <person name="Allen J.E."/>
            <person name="Ambesi-Impiombato A."/>
            <person name="Apweiler R."/>
            <person name="Aturaliya R.N."/>
            <person name="Bailey T.L."/>
            <person name="Bansal M."/>
            <person name="Baxter L."/>
            <person name="Beisel K.W."/>
            <person name="Bersano T."/>
            <person name="Bono H."/>
            <person name="Chalk A.M."/>
            <person name="Chiu K.P."/>
            <person name="Choudhary V."/>
            <person name="Christoffels A."/>
            <person name="Clutterbuck D.R."/>
            <person name="Crowe M.L."/>
            <person name="Dalla E."/>
            <person name="Dalrymple B.P."/>
            <person name="de Bono B."/>
            <person name="Della Gatta G."/>
            <person name="di Bernardo D."/>
            <person name="Down T."/>
            <person name="Engstrom P."/>
            <person name="Fagiolini M."/>
            <person name="Faulkner G."/>
            <person name="Fletcher C.F."/>
            <person name="Fukushima T."/>
            <person name="Furuno M."/>
            <person name="Futaki S."/>
            <person name="Gariboldi M."/>
            <person name="Georgii-Hemming P."/>
            <person name="Gingeras T.R."/>
            <person name="Gojobori T."/>
            <person name="Green R.E."/>
            <person name="Gustincich S."/>
            <person name="Harbers M."/>
            <person name="Hayashi Y."/>
            <person name="Hensch T.K."/>
            <person name="Hirokawa N."/>
            <person name="Hill D."/>
            <person name="Huminiecki L."/>
            <person name="Iacono M."/>
            <person name="Ikeo K."/>
            <person name="Iwama A."/>
            <person name="Ishikawa T."/>
            <person name="Jakt M."/>
            <person name="Kanapin A."/>
            <person name="Katoh M."/>
            <person name="Kawasawa Y."/>
            <person name="Kelso J."/>
            <person name="Kitamura H."/>
            <person name="Kitano H."/>
            <person name="Kollias G."/>
            <person name="Krishnan S.P."/>
            <person name="Kruger A."/>
            <person name="Kummerfeld S.K."/>
            <person name="Kurochkin I.V."/>
            <person name="Lareau L.F."/>
            <person name="Lazarevic D."/>
            <person name="Lipovich L."/>
            <person name="Liu J."/>
            <person name="Liuni S."/>
            <person name="McWilliam S."/>
            <person name="Madan Babu M."/>
            <person name="Madera M."/>
            <person name="Marchionni L."/>
            <person name="Matsuda H."/>
            <person name="Matsuzawa S."/>
            <person name="Miki H."/>
            <person name="Mignone F."/>
            <person name="Miyake S."/>
            <person name="Morris K."/>
            <person name="Mottagui-Tabar S."/>
            <person name="Mulder N."/>
            <person name="Nakano N."/>
            <person name="Nakauchi H."/>
            <person name="Ng P."/>
            <person name="Nilsson R."/>
            <person name="Nishiguchi S."/>
            <person name="Nishikawa S."/>
            <person name="Nori F."/>
            <person name="Ohara O."/>
            <person name="Okazaki Y."/>
            <person name="Orlando V."/>
            <person name="Pang K.C."/>
            <person name="Pavan W.J."/>
            <person name="Pavesi G."/>
            <person name="Pesole G."/>
            <person name="Petrovsky N."/>
            <person name="Piazza S."/>
            <person name="Reed J."/>
            <person name="Reid J.F."/>
            <person name="Ring B.Z."/>
            <person name="Ringwald M."/>
            <person name="Rost B."/>
            <person name="Ruan Y."/>
            <person name="Salzberg S.L."/>
            <person name="Sandelin A."/>
            <person name="Schneider C."/>
            <person name="Schoenbach C."/>
            <person name="Sekiguchi K."/>
            <person name="Semple C.A."/>
            <person name="Seno S."/>
            <person name="Sessa L."/>
            <person name="Sheng Y."/>
            <person name="Shibata Y."/>
            <person name="Shimada H."/>
            <person name="Shimada K."/>
            <person name="Silva D."/>
            <person name="Sinclair B."/>
            <person name="Sperling S."/>
            <person name="Stupka E."/>
            <person name="Sugiura K."/>
            <person name="Sultana R."/>
            <person name="Takenaka Y."/>
            <person name="Taki K."/>
            <person name="Tammoja K."/>
            <person name="Tan S.L."/>
            <person name="Tang S."/>
            <person name="Taylor M.S."/>
            <person name="Tegner J."/>
            <person name="Teichmann S.A."/>
            <person name="Ueda H.R."/>
            <person name="van Nimwegen E."/>
            <person name="Verardo R."/>
            <person name="Wei C.L."/>
            <person name="Yagi K."/>
            <person name="Yamanishi H."/>
            <person name="Zabarovsky E."/>
            <person name="Zhu S."/>
            <person name="Zimmer A."/>
            <person name="Hide W."/>
            <person name="Bult C."/>
            <person name="Grimmond S.M."/>
            <person name="Teasdale R.D."/>
            <person name="Liu E.T."/>
            <person name="Brusic V."/>
            <person name="Quackenbush J."/>
            <person name="Wahlestedt C."/>
            <person name="Mattick J.S."/>
            <person name="Hume D.A."/>
            <person name="Kai C."/>
            <person name="Sasaki D."/>
            <person name="Tomaru Y."/>
            <person name="Fukuda S."/>
            <person name="Kanamori-Katayama M."/>
            <person name="Suzuki M."/>
            <person name="Aoki J."/>
            <person name="Arakawa T."/>
            <person name="Iida J."/>
            <person name="Imamura K."/>
            <person name="Itoh M."/>
            <person name="Kato T."/>
            <person name="Kawaji H."/>
            <person name="Kawagashira N."/>
            <person name="Kawashima T."/>
            <person name="Kojima M."/>
            <person name="Kondo S."/>
            <person name="Konno H."/>
            <person name="Nakano K."/>
            <person name="Ninomiya N."/>
            <person name="Nishio T."/>
            <person name="Okada M."/>
            <person name="Plessy C."/>
            <person name="Shibata K."/>
            <person name="Shiraki T."/>
            <person name="Suzuki S."/>
            <person name="Tagami M."/>
            <person name="Waki K."/>
            <person name="Watahiki A."/>
            <person name="Okamura-Oho Y."/>
            <person name="Suzuki H."/>
            <person name="Kawai J."/>
            <person name="Hayashizaki Y."/>
        </authorList>
    </citation>
    <scope>NUCLEOTIDE SEQUENCE [LARGE SCALE MRNA]</scope>
    <source>
        <strain>C57BL/6J</strain>
        <tissue>Kidney</tissue>
    </source>
</reference>
<reference key="3">
    <citation type="journal article" date="2009" name="PLoS Biol.">
        <title>Lineage-specific biology revealed by a finished genome assembly of the mouse.</title>
        <authorList>
            <person name="Church D.M."/>
            <person name="Goodstadt L."/>
            <person name="Hillier L.W."/>
            <person name="Zody M.C."/>
            <person name="Goldstein S."/>
            <person name="She X."/>
            <person name="Bult C.J."/>
            <person name="Agarwala R."/>
            <person name="Cherry J.L."/>
            <person name="DiCuccio M."/>
            <person name="Hlavina W."/>
            <person name="Kapustin Y."/>
            <person name="Meric P."/>
            <person name="Maglott D."/>
            <person name="Birtle Z."/>
            <person name="Marques A.C."/>
            <person name="Graves T."/>
            <person name="Zhou S."/>
            <person name="Teague B."/>
            <person name="Potamousis K."/>
            <person name="Churas C."/>
            <person name="Place M."/>
            <person name="Herschleb J."/>
            <person name="Runnheim R."/>
            <person name="Forrest D."/>
            <person name="Amos-Landgraf J."/>
            <person name="Schwartz D.C."/>
            <person name="Cheng Z."/>
            <person name="Lindblad-Toh K."/>
            <person name="Eichler E.E."/>
            <person name="Ponting C.P."/>
        </authorList>
    </citation>
    <scope>NUCLEOTIDE SEQUENCE [LARGE SCALE GENOMIC DNA]</scope>
    <source>
        <strain>C57BL/6J</strain>
    </source>
</reference>
<reference key="4">
    <citation type="journal article" date="2004" name="Genome Res.">
        <title>The status, quality, and expansion of the NIH full-length cDNA project: the Mammalian Gene Collection (MGC).</title>
        <authorList>
            <consortium name="The MGC Project Team"/>
        </authorList>
    </citation>
    <scope>NUCLEOTIDE SEQUENCE [LARGE SCALE MRNA]</scope>
    <source>
        <strain>C57BL/6J</strain>
        <tissue>Thymus</tissue>
    </source>
</reference>
<reference key="5">
    <citation type="journal article" date="2010" name="Cell">
        <title>A tissue-specific atlas of mouse protein phosphorylation and expression.</title>
        <authorList>
            <person name="Huttlin E.L."/>
            <person name="Jedrychowski M.P."/>
            <person name="Elias J.E."/>
            <person name="Goswami T."/>
            <person name="Rad R."/>
            <person name="Beausoleil S.A."/>
            <person name="Villen J."/>
            <person name="Haas W."/>
            <person name="Sowa M.E."/>
            <person name="Gygi S.P."/>
        </authorList>
    </citation>
    <scope>IDENTIFICATION BY MASS SPECTROMETRY [LARGE SCALE ANALYSIS]</scope>
    <source>
        <tissue>Brain</tissue>
        <tissue>Brown adipose tissue</tissue>
        <tissue>Heart</tissue>
        <tissue>Kidney</tissue>
        <tissue>Liver</tissue>
        <tissue>Lung</tissue>
        <tissue>Pancreas</tissue>
        <tissue>Spleen</tissue>
        <tissue>Testis</tissue>
    </source>
</reference>
<reference key="6">
    <citation type="journal article" date="2013" name="Mol. Cell">
        <title>SIRT5-mediated lysine desuccinylation impacts diverse metabolic pathways.</title>
        <authorList>
            <person name="Park J."/>
            <person name="Chen Y."/>
            <person name="Tishkoff D.X."/>
            <person name="Peng C."/>
            <person name="Tan M."/>
            <person name="Dai L."/>
            <person name="Xie Z."/>
            <person name="Zhang Y."/>
            <person name="Zwaans B.M."/>
            <person name="Skinner M.E."/>
            <person name="Lombard D.B."/>
            <person name="Zhao Y."/>
        </authorList>
    </citation>
    <scope>ACETYLATION [LARGE SCALE ANALYSIS] AT LYS-60</scope>
    <scope>IDENTIFICATION BY MASS SPECTROMETRY [LARGE SCALE ANALYSIS]</scope>
    <source>
        <tissue>Embryonic fibroblast</tissue>
    </source>
</reference>
<sequence>MPKHEFSVDMTCEGCAEAVSRVLNKLGGVEFNIDLPNKKVCIDSEHSSDTLLATLNKTGKAVSYLGPK</sequence>
<evidence type="ECO:0000250" key="1"/>
<evidence type="ECO:0000250" key="2">
    <source>
        <dbReference type="UniProtKB" id="O00244"/>
    </source>
</evidence>
<evidence type="ECO:0000255" key="3">
    <source>
        <dbReference type="PROSITE-ProRule" id="PRU00280"/>
    </source>
</evidence>
<evidence type="ECO:0000305" key="4"/>
<evidence type="ECO:0000312" key="5">
    <source>
        <dbReference type="MGI" id="MGI:1333855"/>
    </source>
</evidence>
<evidence type="ECO:0007744" key="6">
    <source>
    </source>
</evidence>
<protein>
    <recommendedName>
        <fullName evidence="4">Copper transport protein ATOX1</fullName>
    </recommendedName>
    <alternativeName>
        <fullName>Metal transport protein ATX1</fullName>
    </alternativeName>
</protein>
<accession>O08997</accession>
<accession>Q5NCU2</accession>
<feature type="chain" id="PRO_0000212538" description="Copper transport protein ATOX1">
    <location>
        <begin position="1"/>
        <end position="68"/>
    </location>
</feature>
<feature type="domain" description="HMA" evidence="3">
    <location>
        <begin position="1"/>
        <end position="63"/>
    </location>
</feature>
<feature type="binding site" evidence="2 3">
    <location>
        <position position="12"/>
    </location>
    <ligand>
        <name>Cu cation</name>
        <dbReference type="ChEBI" id="CHEBI:23378"/>
    </ligand>
</feature>
<feature type="binding site" evidence="2 3">
    <location>
        <position position="15"/>
    </location>
    <ligand>
        <name>Cu cation</name>
        <dbReference type="ChEBI" id="CHEBI:23378"/>
    </ligand>
</feature>
<feature type="modified residue" description="Phosphoserine" evidence="2">
    <location>
        <position position="47"/>
    </location>
</feature>
<feature type="modified residue" description="N6-acetyllysine" evidence="6">
    <location>
        <position position="60"/>
    </location>
</feature>
<name>ATOX1_MOUSE</name>
<proteinExistence type="evidence at protein level"/>
<keyword id="KW-0007">Acetylation</keyword>
<keyword id="KW-0143">Chaperone</keyword>
<keyword id="KW-0186">Copper</keyword>
<keyword id="KW-0187">Copper transport</keyword>
<keyword id="KW-0406">Ion transport</keyword>
<keyword id="KW-0479">Metal-binding</keyword>
<keyword id="KW-0597">Phosphoprotein</keyword>
<keyword id="KW-1185">Reference proteome</keyword>
<keyword id="KW-0813">Transport</keyword>
<organism>
    <name type="scientific">Mus musculus</name>
    <name type="common">Mouse</name>
    <dbReference type="NCBI Taxonomy" id="10090"/>
    <lineage>
        <taxon>Eukaryota</taxon>
        <taxon>Metazoa</taxon>
        <taxon>Chordata</taxon>
        <taxon>Craniata</taxon>
        <taxon>Vertebrata</taxon>
        <taxon>Euteleostomi</taxon>
        <taxon>Mammalia</taxon>
        <taxon>Eutheria</taxon>
        <taxon>Euarchontoglires</taxon>
        <taxon>Glires</taxon>
        <taxon>Rodentia</taxon>
        <taxon>Myomorpha</taxon>
        <taxon>Muroidea</taxon>
        <taxon>Muridae</taxon>
        <taxon>Murinae</taxon>
        <taxon>Mus</taxon>
        <taxon>Mus</taxon>
    </lineage>
</organism>